<accession>Q2JD58</accession>
<reference key="1">
    <citation type="journal article" date="2007" name="Genome Res.">
        <title>Genome characteristics of facultatively symbiotic Frankia sp. strains reflect host range and host plant biogeography.</title>
        <authorList>
            <person name="Normand P."/>
            <person name="Lapierre P."/>
            <person name="Tisa L.S."/>
            <person name="Gogarten J.P."/>
            <person name="Alloisio N."/>
            <person name="Bagnarol E."/>
            <person name="Bassi C.A."/>
            <person name="Berry A.M."/>
            <person name="Bickhart D.M."/>
            <person name="Choisne N."/>
            <person name="Couloux A."/>
            <person name="Cournoyer B."/>
            <person name="Cruveiller S."/>
            <person name="Daubin V."/>
            <person name="Demange N."/>
            <person name="Francino M.P."/>
            <person name="Goltsman E."/>
            <person name="Huang Y."/>
            <person name="Kopp O.R."/>
            <person name="Labarre L."/>
            <person name="Lapidus A."/>
            <person name="Lavire C."/>
            <person name="Marechal J."/>
            <person name="Martinez M."/>
            <person name="Mastronunzio J.E."/>
            <person name="Mullin B.C."/>
            <person name="Niemann J."/>
            <person name="Pujic P."/>
            <person name="Rawnsley T."/>
            <person name="Rouy Z."/>
            <person name="Schenowitz C."/>
            <person name="Sellstedt A."/>
            <person name="Tavares F."/>
            <person name="Tomkins J.P."/>
            <person name="Vallenet D."/>
            <person name="Valverde C."/>
            <person name="Wall L.G."/>
            <person name="Wang Y."/>
            <person name="Medigue C."/>
            <person name="Benson D.R."/>
        </authorList>
    </citation>
    <scope>NUCLEOTIDE SEQUENCE [LARGE SCALE GENOMIC DNA]</scope>
    <source>
        <strain>DSM 45818 / CECT 9043 / HFP020203 / CcI3</strain>
    </source>
</reference>
<keyword id="KW-0963">Cytoplasm</keyword>
<keyword id="KW-0489">Methyltransferase</keyword>
<keyword id="KW-1185">Reference proteome</keyword>
<keyword id="KW-0698">rRNA processing</keyword>
<keyword id="KW-0949">S-adenosyl-L-methionine</keyword>
<keyword id="KW-0808">Transferase</keyword>
<organism>
    <name type="scientific">Frankia casuarinae (strain DSM 45818 / CECT 9043 / HFP020203 / CcI3)</name>
    <dbReference type="NCBI Taxonomy" id="106370"/>
    <lineage>
        <taxon>Bacteria</taxon>
        <taxon>Bacillati</taxon>
        <taxon>Actinomycetota</taxon>
        <taxon>Actinomycetes</taxon>
        <taxon>Frankiales</taxon>
        <taxon>Frankiaceae</taxon>
        <taxon>Frankia</taxon>
    </lineage>
</organism>
<feature type="chain" id="PRO_0000386904" description="Ribosomal RNA small subunit methyltransferase H">
    <location>
        <begin position="1"/>
        <end position="321"/>
    </location>
</feature>
<feature type="region of interest" description="Disordered" evidence="2">
    <location>
        <begin position="277"/>
        <end position="321"/>
    </location>
</feature>
<feature type="binding site" evidence="1">
    <location>
        <begin position="29"/>
        <end position="31"/>
    </location>
    <ligand>
        <name>S-adenosyl-L-methionine</name>
        <dbReference type="ChEBI" id="CHEBI:59789"/>
    </ligand>
</feature>
<feature type="binding site" evidence="1">
    <location>
        <position position="48"/>
    </location>
    <ligand>
        <name>S-adenosyl-L-methionine</name>
        <dbReference type="ChEBI" id="CHEBI:59789"/>
    </ligand>
</feature>
<feature type="binding site" evidence="1">
    <location>
        <position position="76"/>
    </location>
    <ligand>
        <name>S-adenosyl-L-methionine</name>
        <dbReference type="ChEBI" id="CHEBI:59789"/>
    </ligand>
</feature>
<feature type="binding site" evidence="1">
    <location>
        <position position="97"/>
    </location>
    <ligand>
        <name>S-adenosyl-L-methionine</name>
        <dbReference type="ChEBI" id="CHEBI:59789"/>
    </ligand>
</feature>
<feature type="binding site" evidence="1">
    <location>
        <position position="104"/>
    </location>
    <ligand>
        <name>S-adenosyl-L-methionine</name>
        <dbReference type="ChEBI" id="CHEBI:59789"/>
    </ligand>
</feature>
<sequence>MLTDRVLTLLAPALRASGAIVVDATVGLGGHAAAVLTAFPHVRLVGLDRDPDALERSGERLHGLAPGRVELVHAVYDEVAEILDRLGHPVVQGILFDLGVSSLQLDTDDRGFAYSRDAPLDMRMDQTRGRTAADVLNTYDADALTRILREYGEERFARRIAGAIVQARAVTPFATSARLADLVRDAIPAPARRTGGNPAKRTFQALRIEVNAELDVLARALPAAFDALAVSGRLVVLSYHSLEDRLVKRQLRGYAEASVPPDLPVVPEGAGPRLRWLTRGAEPASETEKAENPRAASVRLRAVERTAPNPDHTRKPTGGAS</sequence>
<proteinExistence type="inferred from homology"/>
<protein>
    <recommendedName>
        <fullName evidence="1">Ribosomal RNA small subunit methyltransferase H</fullName>
        <ecNumber evidence="1">2.1.1.199</ecNumber>
    </recommendedName>
    <alternativeName>
        <fullName evidence="1">16S rRNA m(4)C1402 methyltransferase</fullName>
    </alternativeName>
    <alternativeName>
        <fullName evidence="1">rRNA (cytosine-N(4)-)-methyltransferase RsmH</fullName>
    </alternativeName>
</protein>
<gene>
    <name evidence="1" type="primary">rsmH</name>
    <name type="synonym">mraW</name>
    <name type="ordered locus">Francci3_1407</name>
</gene>
<comment type="function">
    <text evidence="1">Specifically methylates the N4 position of cytidine in position 1402 (C1402) of 16S rRNA.</text>
</comment>
<comment type="catalytic activity">
    <reaction evidence="1">
        <text>cytidine(1402) in 16S rRNA + S-adenosyl-L-methionine = N(4)-methylcytidine(1402) in 16S rRNA + S-adenosyl-L-homocysteine + H(+)</text>
        <dbReference type="Rhea" id="RHEA:42928"/>
        <dbReference type="Rhea" id="RHEA-COMP:10286"/>
        <dbReference type="Rhea" id="RHEA-COMP:10287"/>
        <dbReference type="ChEBI" id="CHEBI:15378"/>
        <dbReference type="ChEBI" id="CHEBI:57856"/>
        <dbReference type="ChEBI" id="CHEBI:59789"/>
        <dbReference type="ChEBI" id="CHEBI:74506"/>
        <dbReference type="ChEBI" id="CHEBI:82748"/>
        <dbReference type="EC" id="2.1.1.199"/>
    </reaction>
</comment>
<comment type="subcellular location">
    <subcellularLocation>
        <location evidence="1">Cytoplasm</location>
    </subcellularLocation>
</comment>
<comment type="similarity">
    <text evidence="1">Belongs to the methyltransferase superfamily. RsmH family.</text>
</comment>
<evidence type="ECO:0000255" key="1">
    <source>
        <dbReference type="HAMAP-Rule" id="MF_01007"/>
    </source>
</evidence>
<evidence type="ECO:0000256" key="2">
    <source>
        <dbReference type="SAM" id="MobiDB-lite"/>
    </source>
</evidence>
<name>RSMH_FRACC</name>
<dbReference type="EC" id="2.1.1.199" evidence="1"/>
<dbReference type="EMBL" id="CP000249">
    <property type="protein sequence ID" value="ABD10784.1"/>
    <property type="molecule type" value="Genomic_DNA"/>
</dbReference>
<dbReference type="SMR" id="Q2JD58"/>
<dbReference type="STRING" id="106370.Francci3_1407"/>
<dbReference type="KEGG" id="fra:Francci3_1407"/>
<dbReference type="eggNOG" id="COG0275">
    <property type="taxonomic scope" value="Bacteria"/>
</dbReference>
<dbReference type="HOGENOM" id="CLU_038422_0_0_11"/>
<dbReference type="PhylomeDB" id="Q2JD58"/>
<dbReference type="Proteomes" id="UP000001937">
    <property type="component" value="Chromosome"/>
</dbReference>
<dbReference type="GO" id="GO:0005737">
    <property type="term" value="C:cytoplasm"/>
    <property type="evidence" value="ECO:0007669"/>
    <property type="project" value="UniProtKB-SubCell"/>
</dbReference>
<dbReference type="GO" id="GO:0071424">
    <property type="term" value="F:rRNA (cytosine-N4-)-methyltransferase activity"/>
    <property type="evidence" value="ECO:0007669"/>
    <property type="project" value="UniProtKB-UniRule"/>
</dbReference>
<dbReference type="GO" id="GO:0070475">
    <property type="term" value="P:rRNA base methylation"/>
    <property type="evidence" value="ECO:0007669"/>
    <property type="project" value="UniProtKB-UniRule"/>
</dbReference>
<dbReference type="FunFam" id="1.10.150.170:FF:000001">
    <property type="entry name" value="Ribosomal RNA small subunit methyltransferase H"/>
    <property type="match status" value="1"/>
</dbReference>
<dbReference type="Gene3D" id="1.10.150.170">
    <property type="entry name" value="Putative methyltransferase TM0872, insert domain"/>
    <property type="match status" value="1"/>
</dbReference>
<dbReference type="Gene3D" id="3.40.50.150">
    <property type="entry name" value="Vaccinia Virus protein VP39"/>
    <property type="match status" value="1"/>
</dbReference>
<dbReference type="HAMAP" id="MF_01007">
    <property type="entry name" value="16SrRNA_methyltr_H"/>
    <property type="match status" value="1"/>
</dbReference>
<dbReference type="InterPro" id="IPR002903">
    <property type="entry name" value="RsmH"/>
</dbReference>
<dbReference type="InterPro" id="IPR023397">
    <property type="entry name" value="SAM-dep_MeTrfase_MraW_recog"/>
</dbReference>
<dbReference type="InterPro" id="IPR029063">
    <property type="entry name" value="SAM-dependent_MTases_sf"/>
</dbReference>
<dbReference type="NCBIfam" id="TIGR00006">
    <property type="entry name" value="16S rRNA (cytosine(1402)-N(4))-methyltransferase RsmH"/>
    <property type="match status" value="1"/>
</dbReference>
<dbReference type="PANTHER" id="PTHR11265:SF0">
    <property type="entry name" value="12S RRNA N4-METHYLCYTIDINE METHYLTRANSFERASE"/>
    <property type="match status" value="1"/>
</dbReference>
<dbReference type="PANTHER" id="PTHR11265">
    <property type="entry name" value="S-ADENOSYL-METHYLTRANSFERASE MRAW"/>
    <property type="match status" value="1"/>
</dbReference>
<dbReference type="Pfam" id="PF01795">
    <property type="entry name" value="Methyltransf_5"/>
    <property type="match status" value="1"/>
</dbReference>
<dbReference type="PIRSF" id="PIRSF004486">
    <property type="entry name" value="MraW"/>
    <property type="match status" value="1"/>
</dbReference>
<dbReference type="SUPFAM" id="SSF81799">
    <property type="entry name" value="Putative methyltransferase TM0872, insert domain"/>
    <property type="match status" value="1"/>
</dbReference>
<dbReference type="SUPFAM" id="SSF53335">
    <property type="entry name" value="S-adenosyl-L-methionine-dependent methyltransferases"/>
    <property type="match status" value="1"/>
</dbReference>